<keyword id="KW-0007">Acetylation</keyword>
<keyword id="KW-0037">Angiogenesis</keyword>
<keyword id="KW-0053">Apoptosis</keyword>
<keyword id="KW-0143">Chaperone</keyword>
<keyword id="KW-0963">Cytoplasm</keyword>
<keyword id="KW-0256">Endoplasmic reticulum</keyword>
<keyword id="KW-0597">Phosphoprotein</keyword>
<keyword id="KW-1185">Reference proteome</keyword>
<feature type="chain" id="PRO_0000163759" description="Phosducin-like protein 3">
    <location>
        <begin position="1"/>
        <end position="240"/>
    </location>
</feature>
<feature type="domain" description="Phosducin" evidence="4">
    <location>
        <begin position="27"/>
        <end position="181"/>
    </location>
</feature>
<feature type="region of interest" description="Thioredoxin fold" evidence="1">
    <location>
        <begin position="92"/>
        <end position="240"/>
    </location>
</feature>
<feature type="modified residue" description="N-acetylmethionine" evidence="3">
    <location>
        <position position="1"/>
    </location>
</feature>
<feature type="modified residue" description="Phosphoserine" evidence="3">
    <location>
        <position position="44"/>
    </location>
</feature>
<feature type="modified residue" description="Phosphoserine" evidence="8">
    <location>
        <position position="65"/>
    </location>
</feature>
<feature type="modified residue" description="Phosphoserine" evidence="3">
    <location>
        <position position="235"/>
    </location>
</feature>
<feature type="modified residue" description="Phosphoserine" evidence="3">
    <location>
        <position position="237"/>
    </location>
</feature>
<feature type="sequence conflict" description="In Ref. 2; BAB23267." evidence="7" ref="2">
    <location>
        <position position="59"/>
    </location>
</feature>
<feature type="sequence conflict" description="In Ref. 3; AAH05601." evidence="7" ref="3">
    <original>P</original>
    <variation>L</variation>
    <location>
        <position position="216"/>
    </location>
</feature>
<comment type="function">
    <text evidence="2 3 5">Acts as a chaperone for the angiogenic VEGF receptor KDR/VEGFR2, increasing its abundance by inhibiting its ubiquitination and degradation (PubMed:26059764). Inhibits the folding activity of the chaperonin-containing T-complex (CCT) which leads to inhibition of cytoskeletal actin folding (By similarity). Acts as a chaperone during heat shock alongside HSP90 and HSP40/70 chaperone complexes (By similarity). Modulates the activation of caspases during apoptosis (By similarity).</text>
</comment>
<comment type="subunit">
    <text evidence="3 6">Interacts (via thioredoxin fold region) with KDR/VEGFR2 (via juxtamembrane domain) (By similarity). Forms ternary complexes with the chaperonin CCT complex and actin substrate, leading to inhibition of actin folding (By similarity). Interacts with XIAP (via BIR 3 and RING domain) (By similarity). Interacts with HSP90AA1 and HSP90AB1 (PubMed:27496612).</text>
</comment>
<comment type="subcellular location">
    <subcellularLocation>
        <location evidence="6">Cytoplasm</location>
    </subcellularLocation>
    <subcellularLocation>
        <location evidence="3">Cytoplasm</location>
        <location evidence="3">Perinuclear region</location>
    </subcellularLocation>
    <subcellularLocation>
        <location evidence="3">Endoplasmic reticulum</location>
    </subcellularLocation>
</comment>
<comment type="tissue specificity">
    <text evidence="5">Expressed in blood vessels (at protein level).</text>
</comment>
<comment type="induction">
    <text evidence="5 6">By hypoxia and heat shock.</text>
</comment>
<comment type="PTM">
    <text evidence="3">N-terminal methionine acetylation destabilizes the protein.</text>
</comment>
<comment type="similarity">
    <text evidence="7">Belongs to the phosducin family.</text>
</comment>
<organism>
    <name type="scientific">Mus musculus</name>
    <name type="common">Mouse</name>
    <dbReference type="NCBI Taxonomy" id="10090"/>
    <lineage>
        <taxon>Eukaryota</taxon>
        <taxon>Metazoa</taxon>
        <taxon>Chordata</taxon>
        <taxon>Craniata</taxon>
        <taxon>Vertebrata</taxon>
        <taxon>Euteleostomi</taxon>
        <taxon>Mammalia</taxon>
        <taxon>Eutheria</taxon>
        <taxon>Euarchontoglires</taxon>
        <taxon>Glires</taxon>
        <taxon>Rodentia</taxon>
        <taxon>Myomorpha</taxon>
        <taxon>Muroidea</taxon>
        <taxon>Muridae</taxon>
        <taxon>Murinae</taxon>
        <taxon>Mus</taxon>
        <taxon>Mus</taxon>
    </lineage>
</organism>
<gene>
    <name type="primary">Pdcl3</name>
    <name type="synonym">Viaf1</name>
</gene>
<dbReference type="EMBL" id="AF110512">
    <property type="protein sequence ID" value="AAG21888.1"/>
    <property type="molecule type" value="mRNA"/>
</dbReference>
<dbReference type="EMBL" id="AK004334">
    <property type="protein sequence ID" value="BAB23267.1"/>
    <property type="molecule type" value="mRNA"/>
</dbReference>
<dbReference type="EMBL" id="AK078372">
    <property type="protein sequence ID" value="BAC37242.1"/>
    <property type="molecule type" value="mRNA"/>
</dbReference>
<dbReference type="EMBL" id="AK168509">
    <property type="protein sequence ID" value="BAE40392.1"/>
    <property type="molecule type" value="mRNA"/>
</dbReference>
<dbReference type="EMBL" id="BC005601">
    <property type="protein sequence ID" value="AAH05601.1"/>
    <property type="molecule type" value="mRNA"/>
</dbReference>
<dbReference type="CCDS" id="CCDS14903.1"/>
<dbReference type="RefSeq" id="NP_081126.2">
    <property type="nucleotide sequence ID" value="NM_026850.4"/>
</dbReference>
<dbReference type="SMR" id="Q8BVF2"/>
<dbReference type="BioGRID" id="213073">
    <property type="interactions" value="3"/>
</dbReference>
<dbReference type="FunCoup" id="Q8BVF2">
    <property type="interactions" value="3130"/>
</dbReference>
<dbReference type="IntAct" id="Q8BVF2">
    <property type="interactions" value="2"/>
</dbReference>
<dbReference type="MINT" id="Q8BVF2"/>
<dbReference type="STRING" id="10090.ENSMUSP00000027247"/>
<dbReference type="ChEMBL" id="CHEMBL4879486"/>
<dbReference type="GlyGen" id="Q8BVF2">
    <property type="glycosylation" value="1 site, 1 O-linked glycan (1 site)"/>
</dbReference>
<dbReference type="iPTMnet" id="Q8BVF2"/>
<dbReference type="PhosphoSitePlus" id="Q8BVF2"/>
<dbReference type="jPOST" id="Q8BVF2"/>
<dbReference type="PaxDb" id="10090-ENSMUSP00000027247"/>
<dbReference type="PeptideAtlas" id="Q8BVF2"/>
<dbReference type="ProteomicsDB" id="287802"/>
<dbReference type="Pumba" id="Q8BVF2"/>
<dbReference type="Antibodypedia" id="17722">
    <property type="antibodies" value="188 antibodies from 26 providers"/>
</dbReference>
<dbReference type="DNASU" id="68833"/>
<dbReference type="Ensembl" id="ENSMUST00000027247.11">
    <property type="protein sequence ID" value="ENSMUSP00000027247.6"/>
    <property type="gene ID" value="ENSMUSG00000026078.11"/>
</dbReference>
<dbReference type="GeneID" id="68833"/>
<dbReference type="KEGG" id="mmu:68833"/>
<dbReference type="UCSC" id="uc007atc.1">
    <property type="organism name" value="mouse"/>
</dbReference>
<dbReference type="AGR" id="MGI:1916083"/>
<dbReference type="CTD" id="79031"/>
<dbReference type="MGI" id="MGI:1916083">
    <property type="gene designation" value="Pdcl3"/>
</dbReference>
<dbReference type="VEuPathDB" id="HostDB:ENSMUSG00000026078"/>
<dbReference type="eggNOG" id="KOG3170">
    <property type="taxonomic scope" value="Eukaryota"/>
</dbReference>
<dbReference type="GeneTree" id="ENSGT00940000154295"/>
<dbReference type="HOGENOM" id="CLU_072604_0_0_1"/>
<dbReference type="InParanoid" id="Q8BVF2"/>
<dbReference type="OMA" id="FCEIRAN"/>
<dbReference type="OrthoDB" id="45518at2759"/>
<dbReference type="PhylomeDB" id="Q8BVF2"/>
<dbReference type="TreeFam" id="TF315179"/>
<dbReference type="BioGRID-ORCS" id="68833">
    <property type="hits" value="12 hits in 78 CRISPR screens"/>
</dbReference>
<dbReference type="ChiTaRS" id="Pdcl3">
    <property type="organism name" value="mouse"/>
</dbReference>
<dbReference type="PRO" id="PR:Q8BVF2"/>
<dbReference type="Proteomes" id="UP000000589">
    <property type="component" value="Chromosome 1"/>
</dbReference>
<dbReference type="RNAct" id="Q8BVF2">
    <property type="molecule type" value="protein"/>
</dbReference>
<dbReference type="Bgee" id="ENSMUSG00000026078">
    <property type="expression patterns" value="Expressed in primary oocyte and 264 other cell types or tissues"/>
</dbReference>
<dbReference type="ExpressionAtlas" id="Q8BVF2">
    <property type="expression patterns" value="baseline and differential"/>
</dbReference>
<dbReference type="GO" id="GO:0005737">
    <property type="term" value="C:cytoplasm"/>
    <property type="evidence" value="ECO:0000314"/>
    <property type="project" value="UniProtKB"/>
</dbReference>
<dbReference type="GO" id="GO:0005829">
    <property type="term" value="C:cytosol"/>
    <property type="evidence" value="ECO:0007669"/>
    <property type="project" value="Ensembl"/>
</dbReference>
<dbReference type="GO" id="GO:0005783">
    <property type="term" value="C:endoplasmic reticulum"/>
    <property type="evidence" value="ECO:0007669"/>
    <property type="project" value="UniProtKB-SubCell"/>
</dbReference>
<dbReference type="GO" id="GO:0005654">
    <property type="term" value="C:nucleoplasm"/>
    <property type="evidence" value="ECO:0007669"/>
    <property type="project" value="Ensembl"/>
</dbReference>
<dbReference type="GO" id="GO:0048471">
    <property type="term" value="C:perinuclear region of cytoplasm"/>
    <property type="evidence" value="ECO:0007669"/>
    <property type="project" value="UniProtKB-SubCell"/>
</dbReference>
<dbReference type="GO" id="GO:0097356">
    <property type="term" value="C:perinucleolar compartment"/>
    <property type="evidence" value="ECO:0007669"/>
    <property type="project" value="Ensembl"/>
</dbReference>
<dbReference type="GO" id="GO:0032991">
    <property type="term" value="C:protein-containing complex"/>
    <property type="evidence" value="ECO:0000314"/>
    <property type="project" value="UniProtKB"/>
</dbReference>
<dbReference type="GO" id="GO:0044183">
    <property type="term" value="F:protein folding chaperone"/>
    <property type="evidence" value="ECO:0000266"/>
    <property type="project" value="MGI"/>
</dbReference>
<dbReference type="GO" id="GO:0043184">
    <property type="term" value="F:vascular endothelial growth factor receptor 2 binding"/>
    <property type="evidence" value="ECO:0000353"/>
    <property type="project" value="MGI"/>
</dbReference>
<dbReference type="GO" id="GO:0030036">
    <property type="term" value="P:actin cytoskeleton organization"/>
    <property type="evidence" value="ECO:0007669"/>
    <property type="project" value="Ensembl"/>
</dbReference>
<dbReference type="GO" id="GO:0001525">
    <property type="term" value="P:angiogenesis"/>
    <property type="evidence" value="ECO:0000315"/>
    <property type="project" value="UniProtKB"/>
</dbReference>
<dbReference type="GO" id="GO:0006915">
    <property type="term" value="P:apoptotic process"/>
    <property type="evidence" value="ECO:0007669"/>
    <property type="project" value="UniProtKB-KW"/>
</dbReference>
<dbReference type="GO" id="GO:0061077">
    <property type="term" value="P:chaperone-mediated protein folding"/>
    <property type="evidence" value="ECO:0007669"/>
    <property type="project" value="Ensembl"/>
</dbReference>
<dbReference type="GO" id="GO:1903645">
    <property type="term" value="P:negative regulation of chaperone-mediated protein folding"/>
    <property type="evidence" value="ECO:0007669"/>
    <property type="project" value="Ensembl"/>
</dbReference>
<dbReference type="GO" id="GO:2000059">
    <property type="term" value="P:negative regulation of ubiquitin-dependent protein catabolic process"/>
    <property type="evidence" value="ECO:0000266"/>
    <property type="project" value="MGI"/>
</dbReference>
<dbReference type="GO" id="GO:0045766">
    <property type="term" value="P:positive regulation of angiogenesis"/>
    <property type="evidence" value="ECO:0000266"/>
    <property type="project" value="MGI"/>
</dbReference>
<dbReference type="GO" id="GO:0001938">
    <property type="term" value="P:positive regulation of endothelial cell proliferation"/>
    <property type="evidence" value="ECO:0000266"/>
    <property type="project" value="MGI"/>
</dbReference>
<dbReference type="GO" id="GO:0010628">
    <property type="term" value="P:positive regulation of gene expression"/>
    <property type="evidence" value="ECO:0000315"/>
    <property type="project" value="UniProtKB"/>
</dbReference>
<dbReference type="GO" id="GO:0050821">
    <property type="term" value="P:protein stabilization"/>
    <property type="evidence" value="ECO:0007669"/>
    <property type="project" value="Ensembl"/>
</dbReference>
<dbReference type="CDD" id="cd02988">
    <property type="entry name" value="Phd_like_VIAF"/>
    <property type="match status" value="1"/>
</dbReference>
<dbReference type="FunFam" id="3.40.30.10:FF:000081">
    <property type="entry name" value="phosducin-like protein 3"/>
    <property type="match status" value="1"/>
</dbReference>
<dbReference type="Gene3D" id="3.40.30.10">
    <property type="entry name" value="Glutaredoxin"/>
    <property type="match status" value="1"/>
</dbReference>
<dbReference type="InterPro" id="IPR051498">
    <property type="entry name" value="Phosducin-like_chap/apop_reg"/>
</dbReference>
<dbReference type="InterPro" id="IPR024253">
    <property type="entry name" value="Phosducin_thioredoxin-like_dom"/>
</dbReference>
<dbReference type="InterPro" id="IPR036249">
    <property type="entry name" value="Thioredoxin-like_sf"/>
</dbReference>
<dbReference type="NCBIfam" id="TIGR01552">
    <property type="entry name" value="phd_fam"/>
    <property type="match status" value="1"/>
</dbReference>
<dbReference type="PANTHER" id="PTHR45809:SF4">
    <property type="entry name" value="PHOSDUCIN-LIKE PROTEIN 3"/>
    <property type="match status" value="1"/>
</dbReference>
<dbReference type="PANTHER" id="PTHR45809">
    <property type="entry name" value="VIRAL IAP-ASSOCIATED FACTOR HOMOLOG"/>
    <property type="match status" value="1"/>
</dbReference>
<dbReference type="Pfam" id="PF02114">
    <property type="entry name" value="Phosducin"/>
    <property type="match status" value="1"/>
</dbReference>
<dbReference type="SUPFAM" id="SSF52833">
    <property type="entry name" value="Thioredoxin-like"/>
    <property type="match status" value="1"/>
</dbReference>
<proteinExistence type="evidence at protein level"/>
<accession>Q8BVF2</accession>
<accession>Q3TH06</accession>
<accession>Q99JX2</accession>
<accession>Q9D0W3</accession>
<evidence type="ECO:0000250" key="1"/>
<evidence type="ECO:0000250" key="2">
    <source>
        <dbReference type="UniProtKB" id="Q4KLJ8"/>
    </source>
</evidence>
<evidence type="ECO:0000250" key="3">
    <source>
        <dbReference type="UniProtKB" id="Q9H2J4"/>
    </source>
</evidence>
<evidence type="ECO:0000255" key="4"/>
<evidence type="ECO:0000269" key="5">
    <source>
    </source>
</evidence>
<evidence type="ECO:0000269" key="6">
    <source>
    </source>
</evidence>
<evidence type="ECO:0000305" key="7"/>
<evidence type="ECO:0007744" key="8">
    <source>
    </source>
</evidence>
<name>PDCL3_MOUSE</name>
<protein>
    <recommendedName>
        <fullName>Phosducin-like protein 3</fullName>
    </recommendedName>
    <alternativeName>
        <fullName>Viral IAP-associated factor 1</fullName>
        <shortName>VIAF-1</shortName>
    </alternativeName>
</protein>
<reference key="1">
    <citation type="journal article" date="2004" name="J. Biol. Chem.">
        <title>VIAF, a conserved inhibitor of apoptosis (IAP)-interacting factor that modulates caspase activation.</title>
        <authorList>
            <person name="Wilkinson J.C."/>
            <person name="Richter B.W.M."/>
            <person name="Wilkinson A.S."/>
            <person name="Burstein E."/>
            <person name="Rumble J.M."/>
            <person name="Balliu B."/>
            <person name="Duckett C.S."/>
        </authorList>
    </citation>
    <scope>NUCLEOTIDE SEQUENCE [MRNA]</scope>
</reference>
<reference key="2">
    <citation type="journal article" date="2005" name="Science">
        <title>The transcriptional landscape of the mammalian genome.</title>
        <authorList>
            <person name="Carninci P."/>
            <person name="Kasukawa T."/>
            <person name="Katayama S."/>
            <person name="Gough J."/>
            <person name="Frith M.C."/>
            <person name="Maeda N."/>
            <person name="Oyama R."/>
            <person name="Ravasi T."/>
            <person name="Lenhard B."/>
            <person name="Wells C."/>
            <person name="Kodzius R."/>
            <person name="Shimokawa K."/>
            <person name="Bajic V.B."/>
            <person name="Brenner S.E."/>
            <person name="Batalov S."/>
            <person name="Forrest A.R."/>
            <person name="Zavolan M."/>
            <person name="Davis M.J."/>
            <person name="Wilming L.G."/>
            <person name="Aidinis V."/>
            <person name="Allen J.E."/>
            <person name="Ambesi-Impiombato A."/>
            <person name="Apweiler R."/>
            <person name="Aturaliya R.N."/>
            <person name="Bailey T.L."/>
            <person name="Bansal M."/>
            <person name="Baxter L."/>
            <person name="Beisel K.W."/>
            <person name="Bersano T."/>
            <person name="Bono H."/>
            <person name="Chalk A.M."/>
            <person name="Chiu K.P."/>
            <person name="Choudhary V."/>
            <person name="Christoffels A."/>
            <person name="Clutterbuck D.R."/>
            <person name="Crowe M.L."/>
            <person name="Dalla E."/>
            <person name="Dalrymple B.P."/>
            <person name="de Bono B."/>
            <person name="Della Gatta G."/>
            <person name="di Bernardo D."/>
            <person name="Down T."/>
            <person name="Engstrom P."/>
            <person name="Fagiolini M."/>
            <person name="Faulkner G."/>
            <person name="Fletcher C.F."/>
            <person name="Fukushima T."/>
            <person name="Furuno M."/>
            <person name="Futaki S."/>
            <person name="Gariboldi M."/>
            <person name="Georgii-Hemming P."/>
            <person name="Gingeras T.R."/>
            <person name="Gojobori T."/>
            <person name="Green R.E."/>
            <person name="Gustincich S."/>
            <person name="Harbers M."/>
            <person name="Hayashi Y."/>
            <person name="Hensch T.K."/>
            <person name="Hirokawa N."/>
            <person name="Hill D."/>
            <person name="Huminiecki L."/>
            <person name="Iacono M."/>
            <person name="Ikeo K."/>
            <person name="Iwama A."/>
            <person name="Ishikawa T."/>
            <person name="Jakt M."/>
            <person name="Kanapin A."/>
            <person name="Katoh M."/>
            <person name="Kawasawa Y."/>
            <person name="Kelso J."/>
            <person name="Kitamura H."/>
            <person name="Kitano H."/>
            <person name="Kollias G."/>
            <person name="Krishnan S.P."/>
            <person name="Kruger A."/>
            <person name="Kummerfeld S.K."/>
            <person name="Kurochkin I.V."/>
            <person name="Lareau L.F."/>
            <person name="Lazarevic D."/>
            <person name="Lipovich L."/>
            <person name="Liu J."/>
            <person name="Liuni S."/>
            <person name="McWilliam S."/>
            <person name="Madan Babu M."/>
            <person name="Madera M."/>
            <person name="Marchionni L."/>
            <person name="Matsuda H."/>
            <person name="Matsuzawa S."/>
            <person name="Miki H."/>
            <person name="Mignone F."/>
            <person name="Miyake S."/>
            <person name="Morris K."/>
            <person name="Mottagui-Tabar S."/>
            <person name="Mulder N."/>
            <person name="Nakano N."/>
            <person name="Nakauchi H."/>
            <person name="Ng P."/>
            <person name="Nilsson R."/>
            <person name="Nishiguchi S."/>
            <person name="Nishikawa S."/>
            <person name="Nori F."/>
            <person name="Ohara O."/>
            <person name="Okazaki Y."/>
            <person name="Orlando V."/>
            <person name="Pang K.C."/>
            <person name="Pavan W.J."/>
            <person name="Pavesi G."/>
            <person name="Pesole G."/>
            <person name="Petrovsky N."/>
            <person name="Piazza S."/>
            <person name="Reed J."/>
            <person name="Reid J.F."/>
            <person name="Ring B.Z."/>
            <person name="Ringwald M."/>
            <person name="Rost B."/>
            <person name="Ruan Y."/>
            <person name="Salzberg S.L."/>
            <person name="Sandelin A."/>
            <person name="Schneider C."/>
            <person name="Schoenbach C."/>
            <person name="Sekiguchi K."/>
            <person name="Semple C.A."/>
            <person name="Seno S."/>
            <person name="Sessa L."/>
            <person name="Sheng Y."/>
            <person name="Shibata Y."/>
            <person name="Shimada H."/>
            <person name="Shimada K."/>
            <person name="Silva D."/>
            <person name="Sinclair B."/>
            <person name="Sperling S."/>
            <person name="Stupka E."/>
            <person name="Sugiura K."/>
            <person name="Sultana R."/>
            <person name="Takenaka Y."/>
            <person name="Taki K."/>
            <person name="Tammoja K."/>
            <person name="Tan S.L."/>
            <person name="Tang S."/>
            <person name="Taylor M.S."/>
            <person name="Tegner J."/>
            <person name="Teichmann S.A."/>
            <person name="Ueda H.R."/>
            <person name="van Nimwegen E."/>
            <person name="Verardo R."/>
            <person name="Wei C.L."/>
            <person name="Yagi K."/>
            <person name="Yamanishi H."/>
            <person name="Zabarovsky E."/>
            <person name="Zhu S."/>
            <person name="Zimmer A."/>
            <person name="Hide W."/>
            <person name="Bult C."/>
            <person name="Grimmond S.M."/>
            <person name="Teasdale R.D."/>
            <person name="Liu E.T."/>
            <person name="Brusic V."/>
            <person name="Quackenbush J."/>
            <person name="Wahlestedt C."/>
            <person name="Mattick J.S."/>
            <person name="Hume D.A."/>
            <person name="Kai C."/>
            <person name="Sasaki D."/>
            <person name="Tomaru Y."/>
            <person name="Fukuda S."/>
            <person name="Kanamori-Katayama M."/>
            <person name="Suzuki M."/>
            <person name="Aoki J."/>
            <person name="Arakawa T."/>
            <person name="Iida J."/>
            <person name="Imamura K."/>
            <person name="Itoh M."/>
            <person name="Kato T."/>
            <person name="Kawaji H."/>
            <person name="Kawagashira N."/>
            <person name="Kawashima T."/>
            <person name="Kojima M."/>
            <person name="Kondo S."/>
            <person name="Konno H."/>
            <person name="Nakano K."/>
            <person name="Ninomiya N."/>
            <person name="Nishio T."/>
            <person name="Okada M."/>
            <person name="Plessy C."/>
            <person name="Shibata K."/>
            <person name="Shiraki T."/>
            <person name="Suzuki S."/>
            <person name="Tagami M."/>
            <person name="Waki K."/>
            <person name="Watahiki A."/>
            <person name="Okamura-Oho Y."/>
            <person name="Suzuki H."/>
            <person name="Kawai J."/>
            <person name="Hayashizaki Y."/>
        </authorList>
    </citation>
    <scope>NUCLEOTIDE SEQUENCE [LARGE SCALE MRNA]</scope>
    <source>
        <strain>C57BL/6J</strain>
        <tissue>Cerebellum</tissue>
        <tissue>Embryo</tissue>
        <tissue>Kidney</tissue>
    </source>
</reference>
<reference key="3">
    <citation type="journal article" date="2004" name="Genome Res.">
        <title>The status, quality, and expansion of the NIH full-length cDNA project: the Mammalian Gene Collection (MGC).</title>
        <authorList>
            <consortium name="The MGC Project Team"/>
        </authorList>
    </citation>
    <scope>NUCLEOTIDE SEQUENCE [LARGE SCALE MRNA]</scope>
</reference>
<reference key="4">
    <citation type="journal article" date="2010" name="Cell">
        <title>A tissue-specific atlas of mouse protein phosphorylation and expression.</title>
        <authorList>
            <person name="Huttlin E.L."/>
            <person name="Jedrychowski M.P."/>
            <person name="Elias J.E."/>
            <person name="Goswami T."/>
            <person name="Rad R."/>
            <person name="Beausoleil S.A."/>
            <person name="Villen J."/>
            <person name="Haas W."/>
            <person name="Sowa M.E."/>
            <person name="Gygi S.P."/>
        </authorList>
    </citation>
    <scope>PHOSPHORYLATION [LARGE SCALE ANALYSIS] AT SER-65</scope>
    <scope>IDENTIFICATION BY MASS SPECTROMETRY [LARGE SCALE ANALYSIS]</scope>
    <source>
        <tissue>Heart</tissue>
        <tissue>Liver</tissue>
        <tissue>Lung</tissue>
        <tissue>Pancreas</tissue>
        <tissue>Spleen</tissue>
    </source>
</reference>
<reference key="5">
    <citation type="journal article" date="2015" name="Angiogenesis">
        <title>Hypoxia-induced expression of phosducin-like 3 regulates expression of VEGFR-2 and promotes angiogenesis.</title>
        <authorList>
            <person name="Srinivasan S."/>
            <person name="Chitalia V."/>
            <person name="Meyer R.D."/>
            <person name="Hartsough E."/>
            <person name="Mehta M."/>
            <person name="Harrold I."/>
            <person name="Anderson N."/>
            <person name="Feng H."/>
            <person name="Smith L.E."/>
            <person name="Jiang Y."/>
            <person name="Costello C.E."/>
            <person name="Rahimi N."/>
        </authorList>
    </citation>
    <scope>FUNCTION</scope>
    <scope>TISSUE SPECIFICITY</scope>
    <scope>INDUCTION</scope>
</reference>
<reference key="6">
    <citation type="journal article" date="2017" name="J. Cell. Biochem.">
        <title>Interaction of a Novel Chaperone PhLP2A With the Heat Shock Protein Hsp90.</title>
        <authorList>
            <person name="Krzemien-Ojak L."/>
            <person name="Goral A."/>
            <person name="Joachimiak E."/>
            <person name="Filipek A."/>
            <person name="Fabczak H."/>
        </authorList>
    </citation>
    <scope>INTERACTION WITH HSP90AA1 AND HSP90AB1</scope>
    <scope>SUBCELLULAR LOCATION</scope>
    <scope>INDUCTION</scope>
</reference>
<sequence length="240" mass="27581">MQDPNADTEWNDILRKKGILPPKESLKELEEEEAEKEEQLLQQSVVKTYEDMTLEELEENEDEFSEEDERAIEMYRQQRLAEWKATQLKNKFGEVLEISGKDYVQEVTKAGEGLWVILHLYKQGIPLCSLINHHLSGLARKFPDVKFIKAISTTCIPNYPDRNLPTVFVYREGDIKAQFIGPLVFGGMNLTIDELEWKLSESGAIKTALEENPKKPIQDLLLSSVRGPVPMRRDSDSEDD</sequence>